<protein>
    <recommendedName>
        <fullName evidence="1">Rhamnulose-1-phosphate aldolase</fullName>
        <ecNumber evidence="1">4.1.2.19</ecNumber>
    </recommendedName>
</protein>
<feature type="chain" id="PRO_1000017344" description="Rhamnulose-1-phosphate aldolase">
    <location>
        <begin position="1"/>
        <end position="274"/>
    </location>
</feature>
<feature type="active site" evidence="1">
    <location>
        <position position="117"/>
    </location>
</feature>
<feature type="binding site" evidence="1">
    <location>
        <position position="141"/>
    </location>
    <ligand>
        <name>Zn(2+)</name>
        <dbReference type="ChEBI" id="CHEBI:29105"/>
    </ligand>
</feature>
<feature type="binding site" evidence="1">
    <location>
        <position position="143"/>
    </location>
    <ligand>
        <name>Zn(2+)</name>
        <dbReference type="ChEBI" id="CHEBI:29105"/>
    </ligand>
</feature>
<feature type="binding site" evidence="1">
    <location>
        <position position="212"/>
    </location>
    <ligand>
        <name>Zn(2+)</name>
        <dbReference type="ChEBI" id="CHEBI:29105"/>
    </ligand>
</feature>
<evidence type="ECO:0000255" key="1">
    <source>
        <dbReference type="HAMAP-Rule" id="MF_00770"/>
    </source>
</evidence>
<accession>Q32A68</accession>
<organism>
    <name type="scientific">Shigella dysenteriae serotype 1 (strain Sd197)</name>
    <dbReference type="NCBI Taxonomy" id="300267"/>
    <lineage>
        <taxon>Bacteria</taxon>
        <taxon>Pseudomonadati</taxon>
        <taxon>Pseudomonadota</taxon>
        <taxon>Gammaproteobacteria</taxon>
        <taxon>Enterobacterales</taxon>
        <taxon>Enterobacteriaceae</taxon>
        <taxon>Shigella</taxon>
    </lineage>
</organism>
<reference key="1">
    <citation type="journal article" date="2005" name="Nucleic Acids Res.">
        <title>Genome dynamics and diversity of Shigella species, the etiologic agents of bacillary dysentery.</title>
        <authorList>
            <person name="Yang F."/>
            <person name="Yang J."/>
            <person name="Zhang X."/>
            <person name="Chen L."/>
            <person name="Jiang Y."/>
            <person name="Yan Y."/>
            <person name="Tang X."/>
            <person name="Wang J."/>
            <person name="Xiong Z."/>
            <person name="Dong J."/>
            <person name="Xue Y."/>
            <person name="Zhu Y."/>
            <person name="Xu X."/>
            <person name="Sun L."/>
            <person name="Chen S."/>
            <person name="Nie H."/>
            <person name="Peng J."/>
            <person name="Xu J."/>
            <person name="Wang Y."/>
            <person name="Yuan Z."/>
            <person name="Wen Y."/>
            <person name="Yao Z."/>
            <person name="Shen Y."/>
            <person name="Qiang B."/>
            <person name="Hou Y."/>
            <person name="Yu J."/>
            <person name="Jin Q."/>
        </authorList>
    </citation>
    <scope>NUCLEOTIDE SEQUENCE [LARGE SCALE GENOMIC DNA]</scope>
    <source>
        <strain>Sd197</strain>
    </source>
</reference>
<sequence length="274" mass="30171">MQNITQSWFVQGMIKATTDAWLKGWDERNGGNLTLRLDDADIALYHDNFHPQPRYIPLSQPMHLLANTPFIVTGSGKFFRNVQLDPAANLGVVKVDSDGAGYHILWGLTNEAVPTSELPAHFLSHCERIKATNGKDRVIMHCHATNLIALTYVLENDTAVFTRQLWEGSTECLVVFPDGVGILPWMVPGTDEIGQATAQEMQKHSLVLWPFHGVFGSGPTLDETFGLIDTAEKSAQVLVKIYSMGGMKQTISREELIALGKRFGVTPLASALAL</sequence>
<name>RHAD_SHIDS</name>
<keyword id="KW-0963">Cytoplasm</keyword>
<keyword id="KW-0456">Lyase</keyword>
<keyword id="KW-0479">Metal-binding</keyword>
<keyword id="KW-1185">Reference proteome</keyword>
<keyword id="KW-0684">Rhamnose metabolism</keyword>
<keyword id="KW-0862">Zinc</keyword>
<proteinExistence type="inferred from homology"/>
<dbReference type="EC" id="4.1.2.19" evidence="1"/>
<dbReference type="EMBL" id="CP000034">
    <property type="protein sequence ID" value="ABB63787.1"/>
    <property type="molecule type" value="Genomic_DNA"/>
</dbReference>
<dbReference type="RefSeq" id="WP_001179718.1">
    <property type="nucleotide sequence ID" value="NC_007606.1"/>
</dbReference>
<dbReference type="RefSeq" id="YP_405278.1">
    <property type="nucleotide sequence ID" value="NC_007606.1"/>
</dbReference>
<dbReference type="SMR" id="Q32A68"/>
<dbReference type="STRING" id="300267.SDY_3844"/>
<dbReference type="EnsemblBacteria" id="ABB63787">
    <property type="protein sequence ID" value="ABB63787"/>
    <property type="gene ID" value="SDY_3844"/>
</dbReference>
<dbReference type="KEGG" id="sdy:SDY_3844"/>
<dbReference type="PATRIC" id="fig|300267.13.peg.4541"/>
<dbReference type="HOGENOM" id="CLU_076831_0_0_6"/>
<dbReference type="UniPathway" id="UPA00541">
    <property type="reaction ID" value="UER00603"/>
</dbReference>
<dbReference type="Proteomes" id="UP000002716">
    <property type="component" value="Chromosome"/>
</dbReference>
<dbReference type="GO" id="GO:0005829">
    <property type="term" value="C:cytosol"/>
    <property type="evidence" value="ECO:0007669"/>
    <property type="project" value="TreeGrafter"/>
</dbReference>
<dbReference type="GO" id="GO:0046872">
    <property type="term" value="F:metal ion binding"/>
    <property type="evidence" value="ECO:0007669"/>
    <property type="project" value="UniProtKB-KW"/>
</dbReference>
<dbReference type="GO" id="GO:0008994">
    <property type="term" value="F:rhamnulose-1-phosphate aldolase activity"/>
    <property type="evidence" value="ECO:0007669"/>
    <property type="project" value="UniProtKB-UniRule"/>
</dbReference>
<dbReference type="GO" id="GO:0019323">
    <property type="term" value="P:pentose catabolic process"/>
    <property type="evidence" value="ECO:0007669"/>
    <property type="project" value="TreeGrafter"/>
</dbReference>
<dbReference type="GO" id="GO:0019301">
    <property type="term" value="P:rhamnose catabolic process"/>
    <property type="evidence" value="ECO:0007669"/>
    <property type="project" value="UniProtKB-UniRule"/>
</dbReference>
<dbReference type="CDD" id="cd00398">
    <property type="entry name" value="Aldolase_II"/>
    <property type="match status" value="1"/>
</dbReference>
<dbReference type="FunFam" id="3.40.225.10:FF:000006">
    <property type="entry name" value="Rhamnulose-1-phosphate aldolase"/>
    <property type="match status" value="1"/>
</dbReference>
<dbReference type="Gene3D" id="3.40.225.10">
    <property type="entry name" value="Class II aldolase/adducin N-terminal domain"/>
    <property type="match status" value="1"/>
</dbReference>
<dbReference type="HAMAP" id="MF_00770">
    <property type="entry name" value="RhaD"/>
    <property type="match status" value="1"/>
</dbReference>
<dbReference type="InterPro" id="IPR050197">
    <property type="entry name" value="Aldolase_class_II_sugar_metab"/>
</dbReference>
<dbReference type="InterPro" id="IPR001303">
    <property type="entry name" value="Aldolase_II/adducin_N"/>
</dbReference>
<dbReference type="InterPro" id="IPR036409">
    <property type="entry name" value="Aldolase_II/adducin_N_sf"/>
</dbReference>
<dbReference type="InterPro" id="IPR013447">
    <property type="entry name" value="Rhamnulose-1-P_Aldolase"/>
</dbReference>
<dbReference type="NCBIfam" id="NF002963">
    <property type="entry name" value="PRK03634.1"/>
    <property type="match status" value="1"/>
</dbReference>
<dbReference type="NCBIfam" id="TIGR02624">
    <property type="entry name" value="rhamnu_1P_ald"/>
    <property type="match status" value="1"/>
</dbReference>
<dbReference type="PANTHER" id="PTHR22789">
    <property type="entry name" value="FUCULOSE PHOSPHATE ALDOLASE"/>
    <property type="match status" value="1"/>
</dbReference>
<dbReference type="PANTHER" id="PTHR22789:SF16">
    <property type="entry name" value="RHAMNULOSE-1-PHOSPHATE ALDOLASE"/>
    <property type="match status" value="1"/>
</dbReference>
<dbReference type="Pfam" id="PF00596">
    <property type="entry name" value="Aldolase_II"/>
    <property type="match status" value="1"/>
</dbReference>
<dbReference type="SMART" id="SM01007">
    <property type="entry name" value="Aldolase_II"/>
    <property type="match status" value="1"/>
</dbReference>
<dbReference type="SUPFAM" id="SSF53639">
    <property type="entry name" value="AraD/HMP-PK domain-like"/>
    <property type="match status" value="1"/>
</dbReference>
<gene>
    <name evidence="1" type="primary">rhaD</name>
    <name type="ordered locus">SDY_3844</name>
</gene>
<comment type="function">
    <text evidence="1">Catalyzes the reversible cleavage of L-rhamnulose-1-phosphate to dihydroxyacetone phosphate (DHAP) and L-lactaldehyde.</text>
</comment>
<comment type="catalytic activity">
    <reaction evidence="1">
        <text>L-rhamnulose 1-phosphate = (S)-lactaldehyde + dihydroxyacetone phosphate</text>
        <dbReference type="Rhea" id="RHEA:19689"/>
        <dbReference type="ChEBI" id="CHEBI:18041"/>
        <dbReference type="ChEBI" id="CHEBI:57642"/>
        <dbReference type="ChEBI" id="CHEBI:58313"/>
        <dbReference type="EC" id="4.1.2.19"/>
    </reaction>
</comment>
<comment type="cofactor">
    <cofactor evidence="1">
        <name>Zn(2+)</name>
        <dbReference type="ChEBI" id="CHEBI:29105"/>
    </cofactor>
    <text evidence="1">Binds 1 zinc ion per subunit.</text>
</comment>
<comment type="pathway">
    <text evidence="1">Carbohydrate degradation; L-rhamnose degradation; glycerone phosphate from L-rhamnose: step 3/3.</text>
</comment>
<comment type="subunit">
    <text evidence="1">Homotetramer.</text>
</comment>
<comment type="subcellular location">
    <subcellularLocation>
        <location evidence="1">Cytoplasm</location>
    </subcellularLocation>
</comment>
<comment type="similarity">
    <text evidence="1">Belongs to the aldolase class II family. RhaD subfamily.</text>
</comment>